<comment type="function">
    <text evidence="1">Catalyzes the decarboxylation of orotidine 5'-monophosphate (OMP) to uridine 5'-monophosphate (UMP).</text>
</comment>
<comment type="catalytic activity">
    <reaction evidence="1">
        <text>orotidine 5'-phosphate + H(+) = UMP + CO2</text>
        <dbReference type="Rhea" id="RHEA:11596"/>
        <dbReference type="ChEBI" id="CHEBI:15378"/>
        <dbReference type="ChEBI" id="CHEBI:16526"/>
        <dbReference type="ChEBI" id="CHEBI:57538"/>
        <dbReference type="ChEBI" id="CHEBI:57865"/>
        <dbReference type="EC" id="4.1.1.23"/>
    </reaction>
</comment>
<comment type="pathway">
    <text evidence="1">Pyrimidine metabolism; UMP biosynthesis via de novo pathway; UMP from orotate: step 2/2.</text>
</comment>
<comment type="subunit">
    <text evidence="1">Homodimer.</text>
</comment>
<comment type="interaction">
    <interactant intactId="EBI-2207109">
        <id>P0CB75</id>
    </interactant>
    <interactant intactId="EBI-2207290">
        <id>P63588</id>
        <label>aroD</label>
    </interactant>
    <organismsDiffer>false</organismsDiffer>
    <experiments>2</experiments>
</comment>
<comment type="interaction">
    <interactant intactId="EBI-2207109">
        <id>P0CB75</id>
    </interactant>
    <interactant intactId="EBI-2207039">
        <id>Q97SE6</id>
        <label>gatA</label>
    </interactant>
    <organismsDiffer>false</organismsDiffer>
    <experiments>2</experiments>
</comment>
<comment type="interaction">
    <interactant intactId="EBI-2207109">
        <id>P0CB75</id>
    </interactant>
    <interactant intactId="EBI-2207053">
        <id>Q97SE5</id>
        <label>gatC</label>
    </interactant>
    <organismsDiffer>false</organismsDiffer>
    <experiments>2</experiments>
</comment>
<comment type="interaction">
    <interactant intactId="EBI-2207109">
        <id>P0CB75</id>
    </interactant>
    <interactant intactId="EBI-2206949">
        <id>Q97NV3</id>
        <label>groES</label>
    </interactant>
    <organismsDiffer>false</organismsDiffer>
    <experiments>2</experiments>
</comment>
<comment type="interaction">
    <interactant intactId="EBI-2207109">
        <id>P0CB75</id>
    </interactant>
    <interactant intactId="EBI-2206955">
        <id>P65887</id>
        <label>purA</label>
    </interactant>
    <organismsDiffer>false</organismsDiffer>
    <experiments>2</experiments>
</comment>
<comment type="interaction">
    <interactant intactId="EBI-2207109">
        <id>P0CB75</id>
    </interactant>
    <interactant intactId="EBI-2207109">
        <id>P0CB75</id>
        <label>pyrF</label>
    </interactant>
    <organismsDiffer>false</organismsDiffer>
    <experiments>2</experiments>
</comment>
<comment type="interaction">
    <interactant intactId="EBI-2207109">
        <id>P0CB75</id>
    </interactant>
    <interactant intactId="EBI-2207368">
        <id>Q97NX5</id>
        <label>scpA</label>
    </interactant>
    <organismsDiffer>false</organismsDiffer>
    <experiments>3</experiments>
</comment>
<comment type="interaction">
    <interactant intactId="EBI-2207109">
        <id>P0CB75</id>
    </interactant>
    <interactant intactId="EBI-2206983">
        <id>Q97SR4</id>
        <label>uppS</label>
    </interactant>
    <organismsDiffer>false</organismsDiffer>
    <experiments>2</experiments>
</comment>
<comment type="similarity">
    <text evidence="1">Belongs to the OMP decarboxylase family. Type 1 subfamily.</text>
</comment>
<accession>P0CB75</accession>
<accession>Q9ZHA7</accession>
<dbReference type="EC" id="4.1.1.23" evidence="1"/>
<dbReference type="EMBL" id="AE005672">
    <property type="protein sequence ID" value="AAK74844.1"/>
    <property type="molecule type" value="Genomic_DNA"/>
</dbReference>
<dbReference type="PIR" id="C95081">
    <property type="entry name" value="C95081"/>
</dbReference>
<dbReference type="RefSeq" id="WP_001206711.1">
    <property type="nucleotide sequence ID" value="NZ_CP155539.1"/>
</dbReference>
<dbReference type="SMR" id="P0CB75"/>
<dbReference type="IntAct" id="P0CB75">
    <property type="interactions" value="7"/>
</dbReference>
<dbReference type="PaxDb" id="170187-SP_0701"/>
<dbReference type="EnsemblBacteria" id="AAK74844">
    <property type="protein sequence ID" value="AAK74844"/>
    <property type="gene ID" value="SP_0701"/>
</dbReference>
<dbReference type="KEGG" id="spn:SP_0701"/>
<dbReference type="eggNOG" id="COG0284">
    <property type="taxonomic scope" value="Bacteria"/>
</dbReference>
<dbReference type="PhylomeDB" id="P0CB75"/>
<dbReference type="BioCyc" id="SPNE170187:G1FZB-719-MONOMER"/>
<dbReference type="UniPathway" id="UPA00070">
    <property type="reaction ID" value="UER00120"/>
</dbReference>
<dbReference type="Proteomes" id="UP000000585">
    <property type="component" value="Chromosome"/>
</dbReference>
<dbReference type="GO" id="GO:0005829">
    <property type="term" value="C:cytosol"/>
    <property type="evidence" value="ECO:0007669"/>
    <property type="project" value="TreeGrafter"/>
</dbReference>
<dbReference type="GO" id="GO:0042802">
    <property type="term" value="F:identical protein binding"/>
    <property type="evidence" value="ECO:0000353"/>
    <property type="project" value="IntAct"/>
</dbReference>
<dbReference type="GO" id="GO:0004590">
    <property type="term" value="F:orotidine-5'-phosphate decarboxylase activity"/>
    <property type="evidence" value="ECO:0007669"/>
    <property type="project" value="UniProtKB-UniRule"/>
</dbReference>
<dbReference type="GO" id="GO:0006207">
    <property type="term" value="P:'de novo' pyrimidine nucleobase biosynthetic process"/>
    <property type="evidence" value="ECO:0007669"/>
    <property type="project" value="InterPro"/>
</dbReference>
<dbReference type="GO" id="GO:0044205">
    <property type="term" value="P:'de novo' UMP biosynthetic process"/>
    <property type="evidence" value="ECO:0007669"/>
    <property type="project" value="UniProtKB-UniRule"/>
</dbReference>
<dbReference type="CDD" id="cd04725">
    <property type="entry name" value="OMP_decarboxylase_like"/>
    <property type="match status" value="1"/>
</dbReference>
<dbReference type="FunFam" id="3.20.20.70:FF:000015">
    <property type="entry name" value="Orotidine 5'-phosphate decarboxylase"/>
    <property type="match status" value="1"/>
</dbReference>
<dbReference type="Gene3D" id="3.20.20.70">
    <property type="entry name" value="Aldolase class I"/>
    <property type="match status" value="1"/>
</dbReference>
<dbReference type="HAMAP" id="MF_01200_B">
    <property type="entry name" value="OMPdecase_type1_B"/>
    <property type="match status" value="1"/>
</dbReference>
<dbReference type="InterPro" id="IPR013785">
    <property type="entry name" value="Aldolase_TIM"/>
</dbReference>
<dbReference type="InterPro" id="IPR014732">
    <property type="entry name" value="OMPdecase"/>
</dbReference>
<dbReference type="InterPro" id="IPR018089">
    <property type="entry name" value="OMPdecase_AS"/>
</dbReference>
<dbReference type="InterPro" id="IPR047596">
    <property type="entry name" value="OMPdecase_bac"/>
</dbReference>
<dbReference type="InterPro" id="IPR001754">
    <property type="entry name" value="OMPdeCOase_dom"/>
</dbReference>
<dbReference type="InterPro" id="IPR011060">
    <property type="entry name" value="RibuloseP-bd_barrel"/>
</dbReference>
<dbReference type="NCBIfam" id="NF001273">
    <property type="entry name" value="PRK00230.1"/>
    <property type="match status" value="1"/>
</dbReference>
<dbReference type="NCBIfam" id="TIGR01740">
    <property type="entry name" value="pyrF"/>
    <property type="match status" value="1"/>
</dbReference>
<dbReference type="PANTHER" id="PTHR32119">
    <property type="entry name" value="OROTIDINE 5'-PHOSPHATE DECARBOXYLASE"/>
    <property type="match status" value="1"/>
</dbReference>
<dbReference type="PANTHER" id="PTHR32119:SF2">
    <property type="entry name" value="OROTIDINE 5'-PHOSPHATE DECARBOXYLASE"/>
    <property type="match status" value="1"/>
</dbReference>
<dbReference type="Pfam" id="PF00215">
    <property type="entry name" value="OMPdecase"/>
    <property type="match status" value="1"/>
</dbReference>
<dbReference type="SMART" id="SM00934">
    <property type="entry name" value="OMPdecase"/>
    <property type="match status" value="1"/>
</dbReference>
<dbReference type="SUPFAM" id="SSF51366">
    <property type="entry name" value="Ribulose-phoshate binding barrel"/>
    <property type="match status" value="1"/>
</dbReference>
<dbReference type="PROSITE" id="PS00156">
    <property type="entry name" value="OMPDECASE"/>
    <property type="match status" value="1"/>
</dbReference>
<feature type="chain" id="PRO_0000134587" description="Orotidine 5'-phosphate decarboxylase">
    <location>
        <begin position="1"/>
        <end position="233"/>
    </location>
</feature>
<feature type="active site" description="Proton donor" evidence="1">
    <location>
        <position position="63"/>
    </location>
</feature>
<feature type="binding site" evidence="1">
    <location>
        <position position="11"/>
    </location>
    <ligand>
        <name>substrate</name>
    </ligand>
</feature>
<feature type="binding site" evidence="1">
    <location>
        <position position="34"/>
    </location>
    <ligand>
        <name>substrate</name>
    </ligand>
</feature>
<feature type="binding site" evidence="1">
    <location>
        <begin position="61"/>
        <end position="70"/>
    </location>
    <ligand>
        <name>substrate</name>
    </ligand>
</feature>
<feature type="binding site" evidence="1">
    <location>
        <position position="117"/>
    </location>
    <ligand>
        <name>substrate</name>
    </ligand>
</feature>
<feature type="binding site" evidence="1">
    <location>
        <position position="179"/>
    </location>
    <ligand>
        <name>substrate</name>
    </ligand>
</feature>
<feature type="binding site" evidence="1">
    <location>
        <position position="188"/>
    </location>
    <ligand>
        <name>substrate</name>
    </ligand>
</feature>
<feature type="binding site" evidence="1">
    <location>
        <position position="208"/>
    </location>
    <ligand>
        <name>substrate</name>
    </ligand>
</feature>
<feature type="binding site" evidence="1">
    <location>
        <position position="209"/>
    </location>
    <ligand>
        <name>substrate</name>
    </ligand>
</feature>
<protein>
    <recommendedName>
        <fullName evidence="1">Orotidine 5'-phosphate decarboxylase</fullName>
        <ecNumber evidence="1">4.1.1.23</ecNumber>
    </recommendedName>
    <alternativeName>
        <fullName evidence="1">OMP decarboxylase</fullName>
        <shortName evidence="1">OMPDCase</shortName>
        <shortName evidence="1">OMPdecase</shortName>
    </alternativeName>
</protein>
<name>PYRF_STRPN</name>
<proteinExistence type="evidence at protein level"/>
<organism>
    <name type="scientific">Streptococcus pneumoniae serotype 4 (strain ATCC BAA-334 / TIGR4)</name>
    <dbReference type="NCBI Taxonomy" id="170187"/>
    <lineage>
        <taxon>Bacteria</taxon>
        <taxon>Bacillati</taxon>
        <taxon>Bacillota</taxon>
        <taxon>Bacilli</taxon>
        <taxon>Lactobacillales</taxon>
        <taxon>Streptococcaceae</taxon>
        <taxon>Streptococcus</taxon>
    </lineage>
</organism>
<evidence type="ECO:0000255" key="1">
    <source>
        <dbReference type="HAMAP-Rule" id="MF_01200"/>
    </source>
</evidence>
<keyword id="KW-0210">Decarboxylase</keyword>
<keyword id="KW-0456">Lyase</keyword>
<keyword id="KW-0665">Pyrimidine biosynthesis</keyword>
<keyword id="KW-1185">Reference proteome</keyword>
<gene>
    <name evidence="1" type="primary">pyrF</name>
    <name type="ordered locus">SP_0701</name>
</gene>
<sequence>MREHRPIIALDFPSFEAVKEFLALFPAEESLYLKVGMELYYAAGPEIVSYLKGLGHSVFLDLKLHDIPNTVKSAMKILSQLGVDMTNVHAAGGVEMMKAAREGLGSQAKLIAVTQLTSTSEAQMQEFQNIQTSLQESVIHYAKKTAEAGLDGVVCSAQEVQVIKQATNPDFICLTPGIRPAGVAVGDQKRVMTPADAYQIGSDYIVVGRPITQAEDPVAAYHAIKDEWTQDWN</sequence>
<reference key="1">
    <citation type="journal article" date="2001" name="Science">
        <title>Complete genome sequence of a virulent isolate of Streptococcus pneumoniae.</title>
        <authorList>
            <person name="Tettelin H."/>
            <person name="Nelson K.E."/>
            <person name="Paulsen I.T."/>
            <person name="Eisen J.A."/>
            <person name="Read T.D."/>
            <person name="Peterson S.N."/>
            <person name="Heidelberg J.F."/>
            <person name="DeBoy R.T."/>
            <person name="Haft D.H."/>
            <person name="Dodson R.J."/>
            <person name="Durkin A.S."/>
            <person name="Gwinn M.L."/>
            <person name="Kolonay J.F."/>
            <person name="Nelson W.C."/>
            <person name="Peterson J.D."/>
            <person name="Umayam L.A."/>
            <person name="White O."/>
            <person name="Salzberg S.L."/>
            <person name="Lewis M.R."/>
            <person name="Radune D."/>
            <person name="Holtzapple E.K."/>
            <person name="Khouri H.M."/>
            <person name="Wolf A.M."/>
            <person name="Utterback T.R."/>
            <person name="Hansen C.L."/>
            <person name="McDonald L.A."/>
            <person name="Feldblyum T.V."/>
            <person name="Angiuoli S.V."/>
            <person name="Dickinson T."/>
            <person name="Hickey E.K."/>
            <person name="Holt I.E."/>
            <person name="Loftus B.J."/>
            <person name="Yang F."/>
            <person name="Smith H.O."/>
            <person name="Venter J.C."/>
            <person name="Dougherty B.A."/>
            <person name="Morrison D.A."/>
            <person name="Hollingshead S.K."/>
            <person name="Fraser C.M."/>
        </authorList>
    </citation>
    <scope>NUCLEOTIDE SEQUENCE [LARGE SCALE GENOMIC DNA]</scope>
    <source>
        <strain>ATCC BAA-334 / TIGR4</strain>
    </source>
</reference>